<protein>
    <recommendedName>
        <fullName evidence="1">Uracil phosphoribosyltransferase</fullName>
        <ecNumber evidence="1">2.4.2.9</ecNumber>
    </recommendedName>
    <alternativeName>
        <fullName evidence="1">UMP pyrophosphorylase</fullName>
    </alternativeName>
    <alternativeName>
        <fullName evidence="1">UPRTase</fullName>
    </alternativeName>
</protein>
<comment type="function">
    <text evidence="1">Catalyzes the conversion of uracil and 5-phospho-alpha-D-ribose 1-diphosphate (PRPP) to UMP and diphosphate.</text>
</comment>
<comment type="catalytic activity">
    <reaction evidence="1">
        <text>UMP + diphosphate = 5-phospho-alpha-D-ribose 1-diphosphate + uracil</text>
        <dbReference type="Rhea" id="RHEA:13017"/>
        <dbReference type="ChEBI" id="CHEBI:17568"/>
        <dbReference type="ChEBI" id="CHEBI:33019"/>
        <dbReference type="ChEBI" id="CHEBI:57865"/>
        <dbReference type="ChEBI" id="CHEBI:58017"/>
        <dbReference type="EC" id="2.4.2.9"/>
    </reaction>
</comment>
<comment type="cofactor">
    <cofactor evidence="1">
        <name>Mg(2+)</name>
        <dbReference type="ChEBI" id="CHEBI:18420"/>
    </cofactor>
    <text evidence="1">Binds 1 Mg(2+) ion per subunit. The magnesium is bound as Mg-PRPP.</text>
</comment>
<comment type="activity regulation">
    <text evidence="1">Allosterically activated by GTP.</text>
</comment>
<comment type="pathway">
    <text evidence="1">Pyrimidine metabolism; UMP biosynthesis via salvage pathway; UMP from uracil: step 1/1.</text>
</comment>
<comment type="similarity">
    <text evidence="1">Belongs to the UPRTase family.</text>
</comment>
<accession>A1R2Y2</accession>
<gene>
    <name evidence="1" type="primary">upp</name>
    <name type="ordered locus">AAur_0795</name>
</gene>
<evidence type="ECO:0000255" key="1">
    <source>
        <dbReference type="HAMAP-Rule" id="MF_01218"/>
    </source>
</evidence>
<sequence length="211" mass="22931">MRTLVVDHPLVAHKLTVLRDKNTPSPVFRQLTEELVTLLAYEATREVKTQPVEIETPVTKTVGTAFTKPTPLVVPILRAGLGMLEGMTKLVPTAEVGFLGMARDEETLDIITYAERLPEDLTGRQIFVLDPMLATGGTLREAIKFLFKRGASDVTCICLLAAPEGLSKLEEELSDANVKIVLASIDEKLNEKSYIVPGLGDAGDRLYGVAG</sequence>
<name>UPP_PAEAT</name>
<organism>
    <name type="scientific">Paenarthrobacter aurescens (strain TC1)</name>
    <dbReference type="NCBI Taxonomy" id="290340"/>
    <lineage>
        <taxon>Bacteria</taxon>
        <taxon>Bacillati</taxon>
        <taxon>Actinomycetota</taxon>
        <taxon>Actinomycetes</taxon>
        <taxon>Micrococcales</taxon>
        <taxon>Micrococcaceae</taxon>
        <taxon>Paenarthrobacter</taxon>
    </lineage>
</organism>
<feature type="chain" id="PRO_1000053673" description="Uracil phosphoribosyltransferase">
    <location>
        <begin position="1"/>
        <end position="211"/>
    </location>
</feature>
<feature type="binding site" evidence="1">
    <location>
        <position position="78"/>
    </location>
    <ligand>
        <name>5-phospho-alpha-D-ribose 1-diphosphate</name>
        <dbReference type="ChEBI" id="CHEBI:58017"/>
    </ligand>
</feature>
<feature type="binding site" evidence="1">
    <location>
        <position position="103"/>
    </location>
    <ligand>
        <name>5-phospho-alpha-D-ribose 1-diphosphate</name>
        <dbReference type="ChEBI" id="CHEBI:58017"/>
    </ligand>
</feature>
<feature type="binding site" evidence="1">
    <location>
        <begin position="130"/>
        <end position="138"/>
    </location>
    <ligand>
        <name>5-phospho-alpha-D-ribose 1-diphosphate</name>
        <dbReference type="ChEBI" id="CHEBI:58017"/>
    </ligand>
</feature>
<feature type="binding site" evidence="1">
    <location>
        <position position="195"/>
    </location>
    <ligand>
        <name>uracil</name>
        <dbReference type="ChEBI" id="CHEBI:17568"/>
    </ligand>
</feature>
<feature type="binding site" evidence="1">
    <location>
        <begin position="200"/>
        <end position="202"/>
    </location>
    <ligand>
        <name>uracil</name>
        <dbReference type="ChEBI" id="CHEBI:17568"/>
    </ligand>
</feature>
<feature type="binding site" evidence="1">
    <location>
        <position position="201"/>
    </location>
    <ligand>
        <name>5-phospho-alpha-D-ribose 1-diphosphate</name>
        <dbReference type="ChEBI" id="CHEBI:58017"/>
    </ligand>
</feature>
<proteinExistence type="inferred from homology"/>
<reference key="1">
    <citation type="journal article" date="2006" name="PLoS Genet.">
        <title>Secrets of soil survival revealed by the genome sequence of Arthrobacter aurescens TC1.</title>
        <authorList>
            <person name="Mongodin E.F."/>
            <person name="Shapir N."/>
            <person name="Daugherty S.C."/>
            <person name="DeBoy R.T."/>
            <person name="Emerson J.B."/>
            <person name="Shvartzbeyn A."/>
            <person name="Radune D."/>
            <person name="Vamathevan J."/>
            <person name="Riggs F."/>
            <person name="Grinberg V."/>
            <person name="Khouri H.M."/>
            <person name="Wackett L.P."/>
            <person name="Nelson K.E."/>
            <person name="Sadowsky M.J."/>
        </authorList>
    </citation>
    <scope>NUCLEOTIDE SEQUENCE [LARGE SCALE GENOMIC DNA]</scope>
    <source>
        <strain>TC1</strain>
    </source>
</reference>
<keyword id="KW-0021">Allosteric enzyme</keyword>
<keyword id="KW-0328">Glycosyltransferase</keyword>
<keyword id="KW-0342">GTP-binding</keyword>
<keyword id="KW-0460">Magnesium</keyword>
<keyword id="KW-0547">Nucleotide-binding</keyword>
<keyword id="KW-0808">Transferase</keyword>
<dbReference type="EC" id="2.4.2.9" evidence="1"/>
<dbReference type="EMBL" id="CP000474">
    <property type="protein sequence ID" value="ABM09757.1"/>
    <property type="molecule type" value="Genomic_DNA"/>
</dbReference>
<dbReference type="RefSeq" id="WP_011773542.1">
    <property type="nucleotide sequence ID" value="NC_008711.1"/>
</dbReference>
<dbReference type="SMR" id="A1R2Y2"/>
<dbReference type="STRING" id="290340.AAur_0795"/>
<dbReference type="KEGG" id="aau:AAur_0795"/>
<dbReference type="eggNOG" id="COG0035">
    <property type="taxonomic scope" value="Bacteria"/>
</dbReference>
<dbReference type="HOGENOM" id="CLU_067096_2_3_11"/>
<dbReference type="OrthoDB" id="9781675at2"/>
<dbReference type="UniPathway" id="UPA00574">
    <property type="reaction ID" value="UER00636"/>
</dbReference>
<dbReference type="Proteomes" id="UP000000637">
    <property type="component" value="Chromosome"/>
</dbReference>
<dbReference type="GO" id="GO:0005525">
    <property type="term" value="F:GTP binding"/>
    <property type="evidence" value="ECO:0007669"/>
    <property type="project" value="UniProtKB-KW"/>
</dbReference>
<dbReference type="GO" id="GO:0000287">
    <property type="term" value="F:magnesium ion binding"/>
    <property type="evidence" value="ECO:0007669"/>
    <property type="project" value="UniProtKB-UniRule"/>
</dbReference>
<dbReference type="GO" id="GO:0004845">
    <property type="term" value="F:uracil phosphoribosyltransferase activity"/>
    <property type="evidence" value="ECO:0007669"/>
    <property type="project" value="UniProtKB-UniRule"/>
</dbReference>
<dbReference type="GO" id="GO:0044206">
    <property type="term" value="P:UMP salvage"/>
    <property type="evidence" value="ECO:0007669"/>
    <property type="project" value="UniProtKB-UniRule"/>
</dbReference>
<dbReference type="GO" id="GO:0006223">
    <property type="term" value="P:uracil salvage"/>
    <property type="evidence" value="ECO:0007669"/>
    <property type="project" value="InterPro"/>
</dbReference>
<dbReference type="CDD" id="cd06223">
    <property type="entry name" value="PRTases_typeI"/>
    <property type="match status" value="1"/>
</dbReference>
<dbReference type="FunFam" id="3.40.50.2020:FF:000003">
    <property type="entry name" value="Uracil phosphoribosyltransferase"/>
    <property type="match status" value="1"/>
</dbReference>
<dbReference type="Gene3D" id="3.40.50.2020">
    <property type="match status" value="1"/>
</dbReference>
<dbReference type="HAMAP" id="MF_01218_B">
    <property type="entry name" value="Upp_B"/>
    <property type="match status" value="1"/>
</dbReference>
<dbReference type="InterPro" id="IPR000836">
    <property type="entry name" value="PRibTrfase_dom"/>
</dbReference>
<dbReference type="InterPro" id="IPR029057">
    <property type="entry name" value="PRTase-like"/>
</dbReference>
<dbReference type="InterPro" id="IPR034332">
    <property type="entry name" value="Upp_B"/>
</dbReference>
<dbReference type="InterPro" id="IPR050054">
    <property type="entry name" value="UPRTase/APRTase"/>
</dbReference>
<dbReference type="InterPro" id="IPR005765">
    <property type="entry name" value="Ura_phspho_trans"/>
</dbReference>
<dbReference type="NCBIfam" id="NF001097">
    <property type="entry name" value="PRK00129.1"/>
    <property type="match status" value="1"/>
</dbReference>
<dbReference type="NCBIfam" id="TIGR01091">
    <property type="entry name" value="upp"/>
    <property type="match status" value="1"/>
</dbReference>
<dbReference type="PANTHER" id="PTHR32315">
    <property type="entry name" value="ADENINE PHOSPHORIBOSYLTRANSFERASE"/>
    <property type="match status" value="1"/>
</dbReference>
<dbReference type="PANTHER" id="PTHR32315:SF4">
    <property type="entry name" value="URACIL PHOSPHORIBOSYLTRANSFERASE, CHLOROPLASTIC"/>
    <property type="match status" value="1"/>
</dbReference>
<dbReference type="Pfam" id="PF14681">
    <property type="entry name" value="UPRTase"/>
    <property type="match status" value="1"/>
</dbReference>
<dbReference type="SUPFAM" id="SSF53271">
    <property type="entry name" value="PRTase-like"/>
    <property type="match status" value="1"/>
</dbReference>